<accession>P09441</accession>
<protein>
    <recommendedName>
        <fullName>Late embryogenesis abundant protein D-113</fullName>
        <shortName>LEA D-113</shortName>
    </recommendedName>
</protein>
<reference key="1">
    <citation type="journal article" date="1988" name="Plant Mol. Biol.">
        <title>Sequence and characterization of 6 Lea proteins and their genes from cotton.</title>
        <authorList>
            <person name="Baker J."/>
            <person name="Steele C."/>
            <person name="Dure L. III"/>
        </authorList>
        <dbReference type="AGRICOLA" id="IND92000052"/>
    </citation>
    <scope>NUCLEOTIDE SEQUENCE</scope>
    <source>
        <strain>cv. Coker 201</strain>
        <tissue>Seed</tissue>
    </source>
</reference>
<dbReference type="EMBL" id="M19406">
    <property type="protein sequence ID" value="AAA92730.1"/>
    <property type="status" value="ALT_SEQ"/>
    <property type="molecule type" value="mRNA"/>
</dbReference>
<dbReference type="EMBL" id="X13202">
    <property type="protein sequence ID" value="CAA31590.1"/>
    <property type="molecule type" value="Genomic_DNA"/>
</dbReference>
<dbReference type="PIR" id="S04044">
    <property type="entry name" value="S04044"/>
</dbReference>
<dbReference type="SMR" id="P09441"/>
<dbReference type="STRING" id="3635.P09441"/>
<dbReference type="PaxDb" id="3635-P09441"/>
<dbReference type="Proteomes" id="UP000189702">
    <property type="component" value="Unplaced"/>
</dbReference>
<dbReference type="GO" id="GO:0009793">
    <property type="term" value="P:embryo development ending in seed dormancy"/>
    <property type="evidence" value="ECO:0007669"/>
    <property type="project" value="InterPro"/>
</dbReference>
<dbReference type="GO" id="GO:0009737">
    <property type="term" value="P:response to abscisic acid"/>
    <property type="evidence" value="ECO:0000270"/>
    <property type="project" value="AgBase"/>
</dbReference>
<dbReference type="GO" id="GO:0009409">
    <property type="term" value="P:response to cold"/>
    <property type="evidence" value="ECO:0000270"/>
    <property type="project" value="AgBase"/>
</dbReference>
<dbReference type="GO" id="GO:0009651">
    <property type="term" value="P:response to salt stress"/>
    <property type="evidence" value="ECO:0000270"/>
    <property type="project" value="AgBase"/>
</dbReference>
<dbReference type="GO" id="GO:0009414">
    <property type="term" value="P:response to water deprivation"/>
    <property type="evidence" value="ECO:0000270"/>
    <property type="project" value="AgBase"/>
</dbReference>
<dbReference type="InterPro" id="IPR005513">
    <property type="entry name" value="LEA_1"/>
</dbReference>
<dbReference type="PANTHER" id="PTHR33493">
    <property type="entry name" value="LATE EMBRYOGENESIS ABUNDANT PROTEIN 6-RELATED"/>
    <property type="match status" value="1"/>
</dbReference>
<dbReference type="PANTHER" id="PTHR33493:SF31">
    <property type="entry name" value="LATE EMBRYOGENESIS ABUNDANT PROTEIN D-113"/>
    <property type="match status" value="1"/>
</dbReference>
<dbReference type="Pfam" id="PF03760">
    <property type="entry name" value="LEA_1"/>
    <property type="match status" value="1"/>
</dbReference>
<evidence type="ECO:0000256" key="1">
    <source>
        <dbReference type="SAM" id="MobiDB-lite"/>
    </source>
</evidence>
<evidence type="ECO:0000305" key="2"/>
<sequence length="165" mass="17488">MQSMKDAAASAKAGMEKAKASMQEKVDQMKTRDPNEKEMARERKEERQEDAELRKQEARHHNATAGHVGGGGIGGTGYTTAGYNIGDTGGYGGTGGHDNRGYPTAGSGYDTGRQDDLSSMGFGGDTEGAYGTTGNQDFPNAASNNAGTRRNTRGGTQDDPYYRSY</sequence>
<organism>
    <name type="scientific">Gossypium hirsutum</name>
    <name type="common">Upland cotton</name>
    <name type="synonym">Gossypium mexicanum</name>
    <dbReference type="NCBI Taxonomy" id="3635"/>
    <lineage>
        <taxon>Eukaryota</taxon>
        <taxon>Viridiplantae</taxon>
        <taxon>Streptophyta</taxon>
        <taxon>Embryophyta</taxon>
        <taxon>Tracheophyta</taxon>
        <taxon>Spermatophyta</taxon>
        <taxon>Magnoliopsida</taxon>
        <taxon>eudicotyledons</taxon>
        <taxon>Gunneridae</taxon>
        <taxon>Pentapetalae</taxon>
        <taxon>rosids</taxon>
        <taxon>malvids</taxon>
        <taxon>Malvales</taxon>
        <taxon>Malvaceae</taxon>
        <taxon>Malvoideae</taxon>
        <taxon>Gossypium</taxon>
    </lineage>
</organism>
<name>LEA13_GOSHI</name>
<comment type="function">
    <text>LEA proteins are late embryonic proteins abundant in higher plant seed embryos. There are two subsets of LEA proteins (5a and 5b), the first ones are expressed when the cotyledon weight reach 80 mg and the second set are expressed above 100 mg. The function of those proteins is not known.</text>
</comment>
<comment type="miscellaneous">
    <text>This is a SET 5a protein.</text>
</comment>
<comment type="similarity">
    <text evidence="2">Belongs to the LEA type 1 family.</text>
</comment>
<feature type="chain" id="PRO_0000221241" description="Late embryogenesis abundant protein D-113">
    <location>
        <begin position="1"/>
        <end position="165"/>
    </location>
</feature>
<feature type="region of interest" description="Disordered" evidence="1">
    <location>
        <begin position="1"/>
        <end position="76"/>
    </location>
</feature>
<feature type="region of interest" description="Disordered" evidence="1">
    <location>
        <begin position="92"/>
        <end position="165"/>
    </location>
</feature>
<feature type="compositionally biased region" description="Low complexity" evidence="1">
    <location>
        <begin position="1"/>
        <end position="13"/>
    </location>
</feature>
<feature type="compositionally biased region" description="Basic and acidic residues" evidence="1">
    <location>
        <begin position="14"/>
        <end position="60"/>
    </location>
</feature>
<feature type="compositionally biased region" description="Gly residues" evidence="1">
    <location>
        <begin position="67"/>
        <end position="76"/>
    </location>
</feature>
<feature type="compositionally biased region" description="Polar residues" evidence="1">
    <location>
        <begin position="132"/>
        <end position="155"/>
    </location>
</feature>
<proteinExistence type="evidence at transcript level"/>
<keyword id="KW-1185">Reference proteome</keyword>